<accession>Q8QVL6</accession>
<feature type="chain" id="PRO_0000404277" description="Capsid protein">
    <location>
        <begin position="1"/>
        <end position="576"/>
    </location>
</feature>
<feature type="region of interest" description="Disordered" evidence="2">
    <location>
        <begin position="489"/>
        <end position="576"/>
    </location>
</feature>
<feature type="compositionally biased region" description="Pro residues" evidence="2">
    <location>
        <begin position="496"/>
        <end position="509"/>
    </location>
</feature>
<feature type="compositionally biased region" description="Acidic residues" evidence="2">
    <location>
        <begin position="520"/>
        <end position="537"/>
    </location>
</feature>
<feature type="compositionally biased region" description="Basic and acidic residues" evidence="2">
    <location>
        <begin position="538"/>
        <end position="551"/>
    </location>
</feature>
<feature type="compositionally biased region" description="Low complexity" evidence="2">
    <location>
        <begin position="562"/>
        <end position="576"/>
    </location>
</feature>
<sequence>MRFRYRKWRRPRRLFRSRRRRGYARRRWRRRAWGRRRRVRRYRRRRGGTKRQYISSIMQWNPQHRHLCYIKGITWLCAARADRMSWPGIKQIAATDSTRYWSTILVGGCGVLTLSMDWFFFENLRWRNRWSHSNVGYDLARYMGTHLYFPPLADIWYIVWTDTEFVDQPKKVMSYTHPWILLMTKKHKVIKPRKWNGKGKKIFLKPPAVFNSAWYTSDKWCGAGLGRIYFSFLNPFKQIMHTNQTEQSFPFAIELGNTDYDKPPNNSYDFKDTNEVKKVWNTAGKKYYYRADWDTGDGNAIMLPNTLSPTTPASWLLLEWDAPYWLWFWGKTYQDFVSSHTPEGNPYYGQIYVKWWPITNPYDQGPHTYPEDKEWCLMMLDPQPNFMTCNSIAAALKIAAFGPCVYAPQDTQTSQIPINIPMYYLSKWQWGGSTQGTSTHIDNPCNPRPKSIQIADPATAPRDVIHPWDVDASGTISTAKLKQLMEGLGYREPKPKPGPPETLIPPGAPTPELDYYSSETESDDFDTGDSEEEEEDHQDPRWVRESLDKLTRRLRGERRQRQQLGKGLLALLKEKK</sequence>
<dbReference type="EMBL" id="AB076002">
    <property type="protein sequence ID" value="BAB90851.1"/>
    <property type="molecule type" value="Genomic_DNA"/>
</dbReference>
<dbReference type="RefSeq" id="YP_003587834.1">
    <property type="nucleotide sequence ID" value="NC_014071.1"/>
</dbReference>
<dbReference type="SMR" id="Q8QVL6"/>
<dbReference type="KEGG" id="vg:9086578"/>
<dbReference type="Proteomes" id="UP000001295">
    <property type="component" value="Segment"/>
</dbReference>
<dbReference type="GO" id="GO:0039615">
    <property type="term" value="C:T=1 icosahedral viral capsid"/>
    <property type="evidence" value="ECO:0007669"/>
    <property type="project" value="UniProtKB-KW"/>
</dbReference>
<dbReference type="InterPro" id="IPR004219">
    <property type="entry name" value="TTvirus_Unk"/>
</dbReference>
<dbReference type="Pfam" id="PF02956">
    <property type="entry name" value="TT_ORF1"/>
    <property type="match status" value="2"/>
</dbReference>
<name>CAPSD_TTVT1</name>
<reference key="1">
    <citation type="journal article" date="2002" name="J. Gen. Virol.">
        <title>Genomic characterization of TT viruses (TTVs) in pigs, cats and dogs and their relatedness with species-specific TTVs in primates and tupaias.</title>
        <authorList>
            <person name="Okamoto H."/>
            <person name="Takahashi M."/>
            <person name="Nishizawa T."/>
            <person name="Tawara A."/>
            <person name="Fukai K."/>
            <person name="Muramatsu U."/>
            <person name="Naito Y."/>
            <person name="Yoshikawa A."/>
        </authorList>
    </citation>
    <scope>NUCLEOTIDE SEQUENCE [GENOMIC DNA]</scope>
</reference>
<comment type="function">
    <text evidence="1">Self-assembles to form an icosahedral capsid with a T=1 symmetry, about 30 nm in diameter, and consisting of 60 capsid proteins. The capsid encapsulates the genomic DNA. Capsid protein is involved in attachment and entry into the host cell (By similarity).</text>
</comment>
<comment type="subcellular location">
    <subcellularLocation>
        <location evidence="3">Virion</location>
    </subcellularLocation>
</comment>
<comment type="similarity">
    <text evidence="3">Belongs to the anelloviridae capsid protein family.</text>
</comment>
<keyword id="KW-0167">Capsid protein</keyword>
<keyword id="KW-1185">Reference proteome</keyword>
<keyword id="KW-1140">T=1 icosahedral capsid protein</keyword>
<keyword id="KW-0946">Virion</keyword>
<organism>
    <name type="scientific">Torque teno canis virus (isolate Cf-TTV10)</name>
    <dbReference type="NCBI Taxonomy" id="766189"/>
    <lineage>
        <taxon>Viruses</taxon>
        <taxon>Viruses incertae sedis</taxon>
        <taxon>Anelloviridae</taxon>
        <taxon>Thetatorquevirus</taxon>
        <taxon>Thetatorquevirus canid1</taxon>
    </lineage>
</organism>
<organismHost>
    <name type="scientific">Canis lupus familiaris</name>
    <name type="common">Dog</name>
    <name type="synonym">Canis familiaris</name>
    <dbReference type="NCBI Taxonomy" id="9615"/>
</organismHost>
<evidence type="ECO:0000250" key="1"/>
<evidence type="ECO:0000256" key="2">
    <source>
        <dbReference type="SAM" id="MobiDB-lite"/>
    </source>
</evidence>
<evidence type="ECO:0000305" key="3"/>
<gene>
    <name type="ORF">ORF1</name>
</gene>
<protein>
    <recommendedName>
        <fullName>Capsid protein</fullName>
    </recommendedName>
</protein>
<proteinExistence type="inferred from homology"/>